<sequence>MKRKKTVLQQILSEKRKKVKEGDSMSGKDEFGTTKYVIYAEFEANGVVERPDVVGAIFGQTEGLLGDDLDLRELQKTGRIGRIRVEVHNKAGKTYGTITVPSSLDRVETAVLAAALETIDRVGPAEARIKVLRIEDVRATKRKYIIERAKEILETLMEQEIPETQEITEEVKKAVRAKELIEYGPEKLPAGPHVPFSDSIIVVEGRADVLNLLKHGIKNAIAVEGTSIPETIIKLSKERIVTAFTDGDRGGELILKELLQVADVDYVARAPEGKEVEELTKKEIVKALRSKVPAEQVINEMFNKGRSFYELIRERESEGERQPRQVTKPEPEVVKAQPKAETPEEKREPATVVRPSAEKIVKPIETSKSAPELEEFREFIERVKKDGIALLLDENKNVIAEIPVRELTNQLKERKDVYAVVFNGVITQRLIDTVSESGVKYIVGARKYNVVRRPVSLKIITFAE</sequence>
<name>DNAG_THEKO</name>
<accession>Q5JH14</accession>
<gene>
    <name evidence="1" type="primary">dnaG</name>
    <name type="ordered locus">TK1410</name>
</gene>
<reference key="1">
    <citation type="journal article" date="2005" name="Genome Res.">
        <title>Complete genome sequence of the hyperthermophilic archaeon Thermococcus kodakaraensis KOD1 and comparison with Pyrococcus genomes.</title>
        <authorList>
            <person name="Fukui T."/>
            <person name="Atomi H."/>
            <person name="Kanai T."/>
            <person name="Matsumi R."/>
            <person name="Fujiwara S."/>
            <person name="Imanaka T."/>
        </authorList>
    </citation>
    <scope>NUCLEOTIDE SEQUENCE [LARGE SCALE GENOMIC DNA]</scope>
    <source>
        <strain>ATCC BAA-918 / JCM 12380 / KOD1</strain>
    </source>
</reference>
<protein>
    <recommendedName>
        <fullName evidence="1">DNA primase DnaG</fullName>
        <ecNumber evidence="1">2.7.7.101</ecNumber>
    </recommendedName>
</protein>
<keyword id="KW-0235">DNA replication</keyword>
<keyword id="KW-0240">DNA-directed RNA polymerase</keyword>
<keyword id="KW-0271">Exosome</keyword>
<keyword id="KW-0460">Magnesium</keyword>
<keyword id="KW-0479">Metal-binding</keyword>
<keyword id="KW-0548">Nucleotidyltransferase</keyword>
<keyword id="KW-0639">Primosome</keyword>
<keyword id="KW-1185">Reference proteome</keyword>
<keyword id="KW-0804">Transcription</keyword>
<keyword id="KW-0808">Transferase</keyword>
<comment type="function">
    <text evidence="1">RNA polymerase that catalyzes the synthesis of short RNA molecules used as primers for DNA polymerase during DNA replication. Also part of the exosome, which is a complex involved in RNA degradation. Acts as a poly(A)-binding protein that enhances the interaction between heteromeric, adenine-rich transcripts and the exosome.</text>
</comment>
<comment type="catalytic activity">
    <reaction evidence="1">
        <text>ssDNA + n NTP = ssDNA/pppN(pN)n-1 hybrid + (n-1) diphosphate.</text>
        <dbReference type="EC" id="2.7.7.101"/>
    </reaction>
</comment>
<comment type="cofactor">
    <cofactor evidence="1">
        <name>Mg(2+)</name>
        <dbReference type="ChEBI" id="CHEBI:18420"/>
    </cofactor>
    <text evidence="1">Binds two Mg(2+) per subunit.</text>
</comment>
<comment type="subunit">
    <text evidence="1">Forms a ternary complex with MCM helicase and DNA. Component of the archaeal exosome complex.</text>
</comment>
<comment type="similarity">
    <text evidence="1">Belongs to the archaeal DnaG primase family.</text>
</comment>
<evidence type="ECO:0000255" key="1">
    <source>
        <dbReference type="HAMAP-Rule" id="MF_00007"/>
    </source>
</evidence>
<evidence type="ECO:0000256" key="2">
    <source>
        <dbReference type="SAM" id="MobiDB-lite"/>
    </source>
</evidence>
<dbReference type="EC" id="2.7.7.101" evidence="1"/>
<dbReference type="EMBL" id="AP006878">
    <property type="protein sequence ID" value="BAD85599.1"/>
    <property type="molecule type" value="Genomic_DNA"/>
</dbReference>
<dbReference type="RefSeq" id="WP_011250361.1">
    <property type="nucleotide sequence ID" value="NC_006624.1"/>
</dbReference>
<dbReference type="SMR" id="Q5JH14"/>
<dbReference type="FunCoup" id="Q5JH14">
    <property type="interactions" value="17"/>
</dbReference>
<dbReference type="STRING" id="69014.TK1410"/>
<dbReference type="EnsemblBacteria" id="BAD85599">
    <property type="protein sequence ID" value="BAD85599"/>
    <property type="gene ID" value="TK1410"/>
</dbReference>
<dbReference type="GeneID" id="78447930"/>
<dbReference type="KEGG" id="tko:TK1410"/>
<dbReference type="PATRIC" id="fig|69014.16.peg.1372"/>
<dbReference type="eggNOG" id="arCOG04281">
    <property type="taxonomic scope" value="Archaea"/>
</dbReference>
<dbReference type="HOGENOM" id="CLU_034626_0_0_2"/>
<dbReference type="InParanoid" id="Q5JH14"/>
<dbReference type="OrthoDB" id="8643at2157"/>
<dbReference type="PhylomeDB" id="Q5JH14"/>
<dbReference type="Proteomes" id="UP000000536">
    <property type="component" value="Chromosome"/>
</dbReference>
<dbReference type="GO" id="GO:0005737">
    <property type="term" value="C:cytoplasm"/>
    <property type="evidence" value="ECO:0000318"/>
    <property type="project" value="GO_Central"/>
</dbReference>
<dbReference type="GO" id="GO:0000428">
    <property type="term" value="C:DNA-directed RNA polymerase complex"/>
    <property type="evidence" value="ECO:0007669"/>
    <property type="project" value="UniProtKB-KW"/>
</dbReference>
<dbReference type="GO" id="GO:0000178">
    <property type="term" value="C:exosome (RNase complex)"/>
    <property type="evidence" value="ECO:0007669"/>
    <property type="project" value="UniProtKB-KW"/>
</dbReference>
<dbReference type="GO" id="GO:1990077">
    <property type="term" value="C:primosome complex"/>
    <property type="evidence" value="ECO:0007669"/>
    <property type="project" value="UniProtKB-KW"/>
</dbReference>
<dbReference type="GO" id="GO:0003899">
    <property type="term" value="F:DNA-directed RNA polymerase activity"/>
    <property type="evidence" value="ECO:0007669"/>
    <property type="project" value="InterPro"/>
</dbReference>
<dbReference type="GO" id="GO:0046872">
    <property type="term" value="F:metal ion binding"/>
    <property type="evidence" value="ECO:0007669"/>
    <property type="project" value="UniProtKB-KW"/>
</dbReference>
<dbReference type="GO" id="GO:0008143">
    <property type="term" value="F:poly(A) binding"/>
    <property type="evidence" value="ECO:0007669"/>
    <property type="project" value="InterPro"/>
</dbReference>
<dbReference type="GO" id="GO:0006269">
    <property type="term" value="P:DNA replication, synthesis of primer"/>
    <property type="evidence" value="ECO:0000318"/>
    <property type="project" value="GO_Central"/>
</dbReference>
<dbReference type="CDD" id="cd01029">
    <property type="entry name" value="TOPRIM_primases"/>
    <property type="match status" value="1"/>
</dbReference>
<dbReference type="FunFam" id="3.40.1360.10:FF:000010">
    <property type="entry name" value="DNA primase DnaG"/>
    <property type="match status" value="1"/>
</dbReference>
<dbReference type="Gene3D" id="3.40.1360.10">
    <property type="match status" value="1"/>
</dbReference>
<dbReference type="HAMAP" id="MF_00007">
    <property type="entry name" value="DNA_primase_DnaG_arc"/>
    <property type="match status" value="1"/>
</dbReference>
<dbReference type="InterPro" id="IPR050219">
    <property type="entry name" value="DnaG_primase"/>
</dbReference>
<dbReference type="InterPro" id="IPR020607">
    <property type="entry name" value="Primase_DnaG_arc"/>
</dbReference>
<dbReference type="InterPro" id="IPR034154">
    <property type="entry name" value="TOPRIM_DnaG/twinkle"/>
</dbReference>
<dbReference type="InterPro" id="IPR006171">
    <property type="entry name" value="TOPRIM_dom"/>
</dbReference>
<dbReference type="NCBIfam" id="NF003108">
    <property type="entry name" value="PRK04031.1-1"/>
    <property type="match status" value="1"/>
</dbReference>
<dbReference type="PANTHER" id="PTHR30313">
    <property type="entry name" value="DNA PRIMASE"/>
    <property type="match status" value="1"/>
</dbReference>
<dbReference type="PANTHER" id="PTHR30313:SF2">
    <property type="entry name" value="DNA PRIMASE"/>
    <property type="match status" value="1"/>
</dbReference>
<dbReference type="Pfam" id="PF13662">
    <property type="entry name" value="Toprim_4"/>
    <property type="match status" value="1"/>
</dbReference>
<dbReference type="SMART" id="SM00493">
    <property type="entry name" value="TOPRIM"/>
    <property type="match status" value="1"/>
</dbReference>
<dbReference type="SUPFAM" id="SSF56731">
    <property type="entry name" value="DNA primase core"/>
    <property type="match status" value="1"/>
</dbReference>
<dbReference type="PROSITE" id="PS50880">
    <property type="entry name" value="TOPRIM"/>
    <property type="match status" value="1"/>
</dbReference>
<proteinExistence type="inferred from homology"/>
<organism>
    <name type="scientific">Thermococcus kodakarensis (strain ATCC BAA-918 / JCM 12380 / KOD1)</name>
    <name type="common">Pyrococcus kodakaraensis (strain KOD1)</name>
    <dbReference type="NCBI Taxonomy" id="69014"/>
    <lineage>
        <taxon>Archaea</taxon>
        <taxon>Methanobacteriati</taxon>
        <taxon>Methanobacteriota</taxon>
        <taxon>Thermococci</taxon>
        <taxon>Thermococcales</taxon>
        <taxon>Thermococcaceae</taxon>
        <taxon>Thermococcus</taxon>
    </lineage>
</organism>
<feature type="chain" id="PRO_0000144131" description="DNA primase DnaG">
    <location>
        <begin position="1"/>
        <end position="464"/>
    </location>
</feature>
<feature type="domain" description="Toprim" evidence="1">
    <location>
        <begin position="198"/>
        <end position="272"/>
    </location>
</feature>
<feature type="region of interest" description="Disordered" evidence="2">
    <location>
        <begin position="315"/>
        <end position="351"/>
    </location>
</feature>
<feature type="compositionally biased region" description="Basic and acidic residues" evidence="2">
    <location>
        <begin position="315"/>
        <end position="333"/>
    </location>
</feature>
<feature type="binding site" evidence="1">
    <location>
        <position position="204"/>
    </location>
    <ligand>
        <name>Mg(2+)</name>
        <dbReference type="ChEBI" id="CHEBI:18420"/>
        <label>1</label>
        <note>catalytic</note>
    </ligand>
</feature>
<feature type="binding site" evidence="1">
    <location>
        <position position="246"/>
    </location>
    <ligand>
        <name>Mg(2+)</name>
        <dbReference type="ChEBI" id="CHEBI:18420"/>
        <label>1</label>
        <note>catalytic</note>
    </ligand>
</feature>
<feature type="binding site" evidence="1">
    <location>
        <position position="246"/>
    </location>
    <ligand>
        <name>Mg(2+)</name>
        <dbReference type="ChEBI" id="CHEBI:18420"/>
        <label>2</label>
    </ligand>
</feature>
<feature type="binding site" evidence="1">
    <location>
        <position position="248"/>
    </location>
    <ligand>
        <name>Mg(2+)</name>
        <dbReference type="ChEBI" id="CHEBI:18420"/>
        <label>2</label>
    </ligand>
</feature>